<gene>
    <name evidence="1" type="primary">hisA</name>
    <name type="ordered locus">CHU_1272</name>
</gene>
<organism>
    <name type="scientific">Cytophaga hutchinsonii (strain ATCC 33406 / DSM 1761 / CIP 103989 / NBRC 15051 / NCIMB 9469 / D465)</name>
    <dbReference type="NCBI Taxonomy" id="269798"/>
    <lineage>
        <taxon>Bacteria</taxon>
        <taxon>Pseudomonadati</taxon>
        <taxon>Bacteroidota</taxon>
        <taxon>Cytophagia</taxon>
        <taxon>Cytophagales</taxon>
        <taxon>Cytophagaceae</taxon>
        <taxon>Cytophaga</taxon>
    </lineage>
</organism>
<accession>Q11VM2</accession>
<keyword id="KW-0028">Amino-acid biosynthesis</keyword>
<keyword id="KW-0963">Cytoplasm</keyword>
<keyword id="KW-0368">Histidine biosynthesis</keyword>
<keyword id="KW-0413">Isomerase</keyword>
<keyword id="KW-1185">Reference proteome</keyword>
<sequence length="240" mass="26485">MIQIIPAIDIIDGKCVRLTQGDYNQKKEYHSNPVEVAKMFEDAGIQRLHLVDLDGAKKKQIVNYKVLENITAATKLSVDFGGGLQSDEDLKIAFDAGARQITAGSIAVKNPEKVQHWLTQFGKECIILGADTKSGMIAVHGWQETSDLSIQQLMNQFIPFGISYSICTDVAKDGLLQGPSFDLYKQLNEEFKQINWIASGGVAELADIEKLNDMGIYGVIVGKAFYEGRITLQQLAQFNA</sequence>
<proteinExistence type="inferred from homology"/>
<dbReference type="EC" id="5.3.1.16" evidence="1"/>
<dbReference type="EMBL" id="CP000383">
    <property type="protein sequence ID" value="ABG58544.1"/>
    <property type="molecule type" value="Genomic_DNA"/>
</dbReference>
<dbReference type="RefSeq" id="WP_011584659.1">
    <property type="nucleotide sequence ID" value="NC_008255.1"/>
</dbReference>
<dbReference type="SMR" id="Q11VM2"/>
<dbReference type="STRING" id="269798.CHU_1272"/>
<dbReference type="KEGG" id="chu:CHU_1272"/>
<dbReference type="eggNOG" id="COG0106">
    <property type="taxonomic scope" value="Bacteria"/>
</dbReference>
<dbReference type="HOGENOM" id="CLU_048577_1_2_10"/>
<dbReference type="OrthoDB" id="9807749at2"/>
<dbReference type="UniPathway" id="UPA00031">
    <property type="reaction ID" value="UER00009"/>
</dbReference>
<dbReference type="Proteomes" id="UP000001822">
    <property type="component" value="Chromosome"/>
</dbReference>
<dbReference type="GO" id="GO:0005737">
    <property type="term" value="C:cytoplasm"/>
    <property type="evidence" value="ECO:0007669"/>
    <property type="project" value="UniProtKB-SubCell"/>
</dbReference>
<dbReference type="GO" id="GO:0003949">
    <property type="term" value="F:1-(5-phosphoribosyl)-5-[(5-phosphoribosylamino)methylideneamino]imidazole-4-carboxamide isomerase activity"/>
    <property type="evidence" value="ECO:0007669"/>
    <property type="project" value="UniProtKB-UniRule"/>
</dbReference>
<dbReference type="GO" id="GO:0000105">
    <property type="term" value="P:L-histidine biosynthetic process"/>
    <property type="evidence" value="ECO:0007669"/>
    <property type="project" value="UniProtKB-UniRule"/>
</dbReference>
<dbReference type="GO" id="GO:0000162">
    <property type="term" value="P:L-tryptophan biosynthetic process"/>
    <property type="evidence" value="ECO:0007669"/>
    <property type="project" value="TreeGrafter"/>
</dbReference>
<dbReference type="CDD" id="cd04732">
    <property type="entry name" value="HisA"/>
    <property type="match status" value="1"/>
</dbReference>
<dbReference type="FunFam" id="3.20.20.70:FF:000009">
    <property type="entry name" value="1-(5-phosphoribosyl)-5-[(5-phosphoribosylamino)methylideneamino] imidazole-4-carboxamide isomerase"/>
    <property type="match status" value="1"/>
</dbReference>
<dbReference type="Gene3D" id="3.20.20.70">
    <property type="entry name" value="Aldolase class I"/>
    <property type="match status" value="1"/>
</dbReference>
<dbReference type="HAMAP" id="MF_01014">
    <property type="entry name" value="HisA"/>
    <property type="match status" value="1"/>
</dbReference>
<dbReference type="InterPro" id="IPR013785">
    <property type="entry name" value="Aldolase_TIM"/>
</dbReference>
<dbReference type="InterPro" id="IPR006062">
    <property type="entry name" value="His_biosynth"/>
</dbReference>
<dbReference type="InterPro" id="IPR006063">
    <property type="entry name" value="HisA_bact_arch"/>
</dbReference>
<dbReference type="InterPro" id="IPR044524">
    <property type="entry name" value="Isoase_HisA-like"/>
</dbReference>
<dbReference type="InterPro" id="IPR023016">
    <property type="entry name" value="Isoase_HisA-like_bact"/>
</dbReference>
<dbReference type="InterPro" id="IPR011060">
    <property type="entry name" value="RibuloseP-bd_barrel"/>
</dbReference>
<dbReference type="NCBIfam" id="TIGR00007">
    <property type="entry name" value="1-(5-phosphoribosyl)-5-[(5-phosphoribosylamino)methylideneamino]imidazole-4-carboxamide isomerase"/>
    <property type="match status" value="1"/>
</dbReference>
<dbReference type="PANTHER" id="PTHR43090">
    <property type="entry name" value="1-(5-PHOSPHORIBOSYL)-5-[(5-PHOSPHORIBOSYLAMINO)METHYLIDENEAMINO] IMIDAZOLE-4-CARBOXAMIDE ISOMERASE"/>
    <property type="match status" value="1"/>
</dbReference>
<dbReference type="PANTHER" id="PTHR43090:SF2">
    <property type="entry name" value="1-(5-PHOSPHORIBOSYL)-5-[(5-PHOSPHORIBOSYLAMINO)METHYLIDENEAMINO] IMIDAZOLE-4-CARBOXAMIDE ISOMERASE"/>
    <property type="match status" value="1"/>
</dbReference>
<dbReference type="Pfam" id="PF00977">
    <property type="entry name" value="His_biosynth"/>
    <property type="match status" value="1"/>
</dbReference>
<dbReference type="SUPFAM" id="SSF51366">
    <property type="entry name" value="Ribulose-phoshate binding barrel"/>
    <property type="match status" value="1"/>
</dbReference>
<feature type="chain" id="PRO_0000290467" description="1-(5-phosphoribosyl)-5-[(5-phosphoribosylamino)methylideneamino] imidazole-4-carboxamide isomerase">
    <location>
        <begin position="1"/>
        <end position="240"/>
    </location>
</feature>
<feature type="active site" description="Proton acceptor" evidence="1">
    <location>
        <position position="9"/>
    </location>
</feature>
<feature type="active site" description="Proton donor" evidence="1">
    <location>
        <position position="131"/>
    </location>
</feature>
<protein>
    <recommendedName>
        <fullName evidence="1">1-(5-phosphoribosyl)-5-[(5-phosphoribosylamino)methylideneamino] imidazole-4-carboxamide isomerase</fullName>
        <ecNumber evidence="1">5.3.1.16</ecNumber>
    </recommendedName>
    <alternativeName>
        <fullName evidence="1">Phosphoribosylformimino-5-aminoimidazole carboxamide ribotide isomerase</fullName>
    </alternativeName>
</protein>
<comment type="catalytic activity">
    <reaction evidence="1">
        <text>1-(5-phospho-beta-D-ribosyl)-5-[(5-phospho-beta-D-ribosylamino)methylideneamino]imidazole-4-carboxamide = 5-[(5-phospho-1-deoxy-D-ribulos-1-ylimino)methylamino]-1-(5-phospho-beta-D-ribosyl)imidazole-4-carboxamide</text>
        <dbReference type="Rhea" id="RHEA:15469"/>
        <dbReference type="ChEBI" id="CHEBI:58435"/>
        <dbReference type="ChEBI" id="CHEBI:58525"/>
        <dbReference type="EC" id="5.3.1.16"/>
    </reaction>
</comment>
<comment type="pathway">
    <text evidence="1">Amino-acid biosynthesis; L-histidine biosynthesis; L-histidine from 5-phospho-alpha-D-ribose 1-diphosphate: step 4/9.</text>
</comment>
<comment type="subcellular location">
    <subcellularLocation>
        <location evidence="1">Cytoplasm</location>
    </subcellularLocation>
</comment>
<comment type="similarity">
    <text evidence="1">Belongs to the HisA/HisF family.</text>
</comment>
<name>HIS4_CYTH3</name>
<reference key="1">
    <citation type="journal article" date="2007" name="Appl. Environ. Microbiol.">
        <title>Genome sequence of the cellulolytic gliding bacterium Cytophaga hutchinsonii.</title>
        <authorList>
            <person name="Xie G."/>
            <person name="Bruce D.C."/>
            <person name="Challacombe J.F."/>
            <person name="Chertkov O."/>
            <person name="Detter J.C."/>
            <person name="Gilna P."/>
            <person name="Han C.S."/>
            <person name="Lucas S."/>
            <person name="Misra M."/>
            <person name="Myers G.L."/>
            <person name="Richardson P."/>
            <person name="Tapia R."/>
            <person name="Thayer N."/>
            <person name="Thompson L.S."/>
            <person name="Brettin T.S."/>
            <person name="Henrissat B."/>
            <person name="Wilson D.B."/>
            <person name="McBride M.J."/>
        </authorList>
    </citation>
    <scope>NUCLEOTIDE SEQUENCE [LARGE SCALE GENOMIC DNA]</scope>
    <source>
        <strain>ATCC 33406 / DSM 1761 / JCM 20678 / CIP 103989 / IAM 12607 / NBRC 15051 / NCIMB 9469 / D465</strain>
    </source>
</reference>
<evidence type="ECO:0000255" key="1">
    <source>
        <dbReference type="HAMAP-Rule" id="MF_01014"/>
    </source>
</evidence>